<sequence>MKKLENLLFDRFGLVFKDVSLLETAFTHTSYANEHRLLKISHNERLEFLGDAVLQLIISEYLFEKYPKRPEGDLTKLRSTIVREESLAGFSRDCQFDRFIKLGKGEEKSGGRERETILGDLFEAFLGALLLDKGLEVVKNFIYQVMIPKVEAGDFEQVTDYKTKLQELLQSNGDVEILYQVVSESGPAHAKNFEVSVSVDGRLVGKGQGRSKKLAEQEAAKNAFEKENHSCI</sequence>
<comment type="function">
    <text evidence="1">Digests double-stranded RNA. Involved in the processing of primary rRNA transcript to yield the immediate precursors to the large and small rRNAs (23S and 16S). Processes some mRNAs, and tRNAs when they are encoded in the rRNA operon. Processes pre-crRNA and tracrRNA of type II CRISPR loci if present in the organism.</text>
</comment>
<comment type="catalytic activity">
    <reaction evidence="1">
        <text>Endonucleolytic cleavage to 5'-phosphomonoester.</text>
        <dbReference type="EC" id="3.1.26.3"/>
    </reaction>
</comment>
<comment type="cofactor">
    <cofactor evidence="1">
        <name>Mg(2+)</name>
        <dbReference type="ChEBI" id="CHEBI:18420"/>
    </cofactor>
</comment>
<comment type="subunit">
    <text evidence="1">Homodimer.</text>
</comment>
<comment type="subcellular location">
    <subcellularLocation>
        <location evidence="1">Cytoplasm</location>
    </subcellularLocation>
</comment>
<comment type="similarity">
    <text evidence="1">Belongs to the ribonuclease III family.</text>
</comment>
<gene>
    <name evidence="1" type="primary">rnc</name>
    <name type="ordered locus">SGO_0783</name>
</gene>
<reference key="1">
    <citation type="journal article" date="2007" name="J. Bacteriol.">
        <title>Genome-wide transcriptional changes in Streptococcus gordonii in response to competence signaling peptide.</title>
        <authorList>
            <person name="Vickerman M.M."/>
            <person name="Iobst S."/>
            <person name="Jesionowski A.M."/>
            <person name="Gill S.R."/>
        </authorList>
    </citation>
    <scope>NUCLEOTIDE SEQUENCE [LARGE SCALE GENOMIC DNA]</scope>
    <source>
        <strain>Challis / ATCC 35105 / BCRC 15272 / CH1 / DL1 / V288</strain>
    </source>
</reference>
<feature type="chain" id="PRO_1000075833" description="Ribonuclease 3">
    <location>
        <begin position="1"/>
        <end position="232"/>
    </location>
</feature>
<feature type="domain" description="RNase III" evidence="1">
    <location>
        <begin position="5"/>
        <end position="134"/>
    </location>
</feature>
<feature type="domain" description="DRBM" evidence="1">
    <location>
        <begin position="160"/>
        <end position="229"/>
    </location>
</feature>
<feature type="active site" evidence="1">
    <location>
        <position position="51"/>
    </location>
</feature>
<feature type="active site" evidence="1">
    <location>
        <position position="123"/>
    </location>
</feature>
<feature type="binding site" evidence="1">
    <location>
        <position position="47"/>
    </location>
    <ligand>
        <name>Mg(2+)</name>
        <dbReference type="ChEBI" id="CHEBI:18420"/>
    </ligand>
</feature>
<feature type="binding site" evidence="1">
    <location>
        <position position="120"/>
    </location>
    <ligand>
        <name>Mg(2+)</name>
        <dbReference type="ChEBI" id="CHEBI:18420"/>
    </ligand>
</feature>
<feature type="binding site" evidence="1">
    <location>
        <position position="123"/>
    </location>
    <ligand>
        <name>Mg(2+)</name>
        <dbReference type="ChEBI" id="CHEBI:18420"/>
    </ligand>
</feature>
<name>RNC_STRGC</name>
<dbReference type="EC" id="3.1.26.3" evidence="1"/>
<dbReference type="EMBL" id="CP000725">
    <property type="protein sequence ID" value="ABV10458.1"/>
    <property type="molecule type" value="Genomic_DNA"/>
</dbReference>
<dbReference type="RefSeq" id="WP_012000242.1">
    <property type="nucleotide sequence ID" value="NC_009785.1"/>
</dbReference>
<dbReference type="SMR" id="A8AWC2"/>
<dbReference type="STRING" id="467705.SGO_0783"/>
<dbReference type="KEGG" id="sgo:SGO_0783"/>
<dbReference type="eggNOG" id="COG0571">
    <property type="taxonomic scope" value="Bacteria"/>
</dbReference>
<dbReference type="HOGENOM" id="CLU_000907_1_3_9"/>
<dbReference type="Proteomes" id="UP000001131">
    <property type="component" value="Chromosome"/>
</dbReference>
<dbReference type="GO" id="GO:0005737">
    <property type="term" value="C:cytoplasm"/>
    <property type="evidence" value="ECO:0007669"/>
    <property type="project" value="UniProtKB-SubCell"/>
</dbReference>
<dbReference type="GO" id="GO:0003725">
    <property type="term" value="F:double-stranded RNA binding"/>
    <property type="evidence" value="ECO:0007669"/>
    <property type="project" value="TreeGrafter"/>
</dbReference>
<dbReference type="GO" id="GO:0046872">
    <property type="term" value="F:metal ion binding"/>
    <property type="evidence" value="ECO:0007669"/>
    <property type="project" value="UniProtKB-KW"/>
</dbReference>
<dbReference type="GO" id="GO:0004525">
    <property type="term" value="F:ribonuclease III activity"/>
    <property type="evidence" value="ECO:0007669"/>
    <property type="project" value="UniProtKB-UniRule"/>
</dbReference>
<dbReference type="GO" id="GO:0019843">
    <property type="term" value="F:rRNA binding"/>
    <property type="evidence" value="ECO:0007669"/>
    <property type="project" value="UniProtKB-KW"/>
</dbReference>
<dbReference type="GO" id="GO:0006397">
    <property type="term" value="P:mRNA processing"/>
    <property type="evidence" value="ECO:0007669"/>
    <property type="project" value="UniProtKB-UniRule"/>
</dbReference>
<dbReference type="GO" id="GO:0010468">
    <property type="term" value="P:regulation of gene expression"/>
    <property type="evidence" value="ECO:0007669"/>
    <property type="project" value="TreeGrafter"/>
</dbReference>
<dbReference type="GO" id="GO:0006364">
    <property type="term" value="P:rRNA processing"/>
    <property type="evidence" value="ECO:0007669"/>
    <property type="project" value="UniProtKB-UniRule"/>
</dbReference>
<dbReference type="GO" id="GO:0008033">
    <property type="term" value="P:tRNA processing"/>
    <property type="evidence" value="ECO:0007669"/>
    <property type="project" value="UniProtKB-KW"/>
</dbReference>
<dbReference type="CDD" id="cd10845">
    <property type="entry name" value="DSRM_RNAse_III_family"/>
    <property type="match status" value="1"/>
</dbReference>
<dbReference type="CDD" id="cd00593">
    <property type="entry name" value="RIBOc"/>
    <property type="match status" value="1"/>
</dbReference>
<dbReference type="FunFam" id="1.10.1520.10:FF:000001">
    <property type="entry name" value="Ribonuclease 3"/>
    <property type="match status" value="1"/>
</dbReference>
<dbReference type="FunFam" id="3.30.160.20:FF:000003">
    <property type="entry name" value="Ribonuclease 3"/>
    <property type="match status" value="1"/>
</dbReference>
<dbReference type="Gene3D" id="3.30.160.20">
    <property type="match status" value="1"/>
</dbReference>
<dbReference type="Gene3D" id="1.10.1520.10">
    <property type="entry name" value="Ribonuclease III domain"/>
    <property type="match status" value="1"/>
</dbReference>
<dbReference type="HAMAP" id="MF_00104">
    <property type="entry name" value="RNase_III"/>
    <property type="match status" value="1"/>
</dbReference>
<dbReference type="InterPro" id="IPR014720">
    <property type="entry name" value="dsRBD_dom"/>
</dbReference>
<dbReference type="InterPro" id="IPR011907">
    <property type="entry name" value="RNase_III"/>
</dbReference>
<dbReference type="InterPro" id="IPR000999">
    <property type="entry name" value="RNase_III_dom"/>
</dbReference>
<dbReference type="InterPro" id="IPR036389">
    <property type="entry name" value="RNase_III_sf"/>
</dbReference>
<dbReference type="NCBIfam" id="TIGR02191">
    <property type="entry name" value="RNaseIII"/>
    <property type="match status" value="1"/>
</dbReference>
<dbReference type="PANTHER" id="PTHR11207:SF0">
    <property type="entry name" value="RIBONUCLEASE 3"/>
    <property type="match status" value="1"/>
</dbReference>
<dbReference type="PANTHER" id="PTHR11207">
    <property type="entry name" value="RIBONUCLEASE III"/>
    <property type="match status" value="1"/>
</dbReference>
<dbReference type="Pfam" id="PF00035">
    <property type="entry name" value="dsrm"/>
    <property type="match status" value="1"/>
</dbReference>
<dbReference type="Pfam" id="PF14622">
    <property type="entry name" value="Ribonucleas_3_3"/>
    <property type="match status" value="1"/>
</dbReference>
<dbReference type="SMART" id="SM00358">
    <property type="entry name" value="DSRM"/>
    <property type="match status" value="1"/>
</dbReference>
<dbReference type="SMART" id="SM00535">
    <property type="entry name" value="RIBOc"/>
    <property type="match status" value="1"/>
</dbReference>
<dbReference type="SUPFAM" id="SSF54768">
    <property type="entry name" value="dsRNA-binding domain-like"/>
    <property type="match status" value="1"/>
</dbReference>
<dbReference type="SUPFAM" id="SSF69065">
    <property type="entry name" value="RNase III domain-like"/>
    <property type="match status" value="1"/>
</dbReference>
<dbReference type="PROSITE" id="PS50137">
    <property type="entry name" value="DS_RBD"/>
    <property type="match status" value="1"/>
</dbReference>
<dbReference type="PROSITE" id="PS00517">
    <property type="entry name" value="RNASE_3_1"/>
    <property type="match status" value="1"/>
</dbReference>
<dbReference type="PROSITE" id="PS50142">
    <property type="entry name" value="RNASE_3_2"/>
    <property type="match status" value="1"/>
</dbReference>
<accession>A8AWC2</accession>
<keyword id="KW-0963">Cytoplasm</keyword>
<keyword id="KW-0255">Endonuclease</keyword>
<keyword id="KW-0378">Hydrolase</keyword>
<keyword id="KW-0460">Magnesium</keyword>
<keyword id="KW-0479">Metal-binding</keyword>
<keyword id="KW-0507">mRNA processing</keyword>
<keyword id="KW-0540">Nuclease</keyword>
<keyword id="KW-1185">Reference proteome</keyword>
<keyword id="KW-0694">RNA-binding</keyword>
<keyword id="KW-0698">rRNA processing</keyword>
<keyword id="KW-0699">rRNA-binding</keyword>
<keyword id="KW-0819">tRNA processing</keyword>
<evidence type="ECO:0000255" key="1">
    <source>
        <dbReference type="HAMAP-Rule" id="MF_00104"/>
    </source>
</evidence>
<proteinExistence type="inferred from homology"/>
<organism>
    <name type="scientific">Streptococcus gordonii (strain Challis / ATCC 35105 / BCRC 15272 / CH1 / DL1 / V288)</name>
    <dbReference type="NCBI Taxonomy" id="467705"/>
    <lineage>
        <taxon>Bacteria</taxon>
        <taxon>Bacillati</taxon>
        <taxon>Bacillota</taxon>
        <taxon>Bacilli</taxon>
        <taxon>Lactobacillales</taxon>
        <taxon>Streptococcaceae</taxon>
        <taxon>Streptococcus</taxon>
    </lineage>
</organism>
<protein>
    <recommendedName>
        <fullName evidence="1">Ribonuclease 3</fullName>
        <ecNumber evidence="1">3.1.26.3</ecNumber>
    </recommendedName>
    <alternativeName>
        <fullName evidence="1">Ribonuclease III</fullName>
        <shortName evidence="1">RNase III</shortName>
    </alternativeName>
</protein>